<accession>B4TVV2</accession>
<keyword id="KW-0032">Aminotransferase</keyword>
<keyword id="KW-0663">Pyridoxal phosphate</keyword>
<keyword id="KW-0808">Transferase</keyword>
<feature type="chain" id="PRO_1000140282" description="Putrescine aminotransferase">
    <location>
        <begin position="1"/>
        <end position="459"/>
    </location>
</feature>
<feature type="binding site" description="in other chain" evidence="1">
    <location>
        <begin position="150"/>
        <end position="151"/>
    </location>
    <ligand>
        <name>pyridoxal 5'-phosphate</name>
        <dbReference type="ChEBI" id="CHEBI:597326"/>
        <note>ligand shared between dimeric partners</note>
    </ligand>
</feature>
<feature type="binding site" description="in other chain" evidence="1">
    <location>
        <position position="274"/>
    </location>
    <ligand>
        <name>pyridoxal 5'-phosphate</name>
        <dbReference type="ChEBI" id="CHEBI:597326"/>
        <note>ligand shared between dimeric partners</note>
    </ligand>
</feature>
<feature type="binding site" evidence="1">
    <location>
        <position position="332"/>
    </location>
    <ligand>
        <name>pyridoxal 5'-phosphate</name>
        <dbReference type="ChEBI" id="CHEBI:597326"/>
        <note>ligand shared between dimeric partners</note>
    </ligand>
</feature>
<feature type="modified residue" description="N6-(pyridoxal phosphate)lysine" evidence="1">
    <location>
        <position position="300"/>
    </location>
</feature>
<organism>
    <name type="scientific">Salmonella schwarzengrund (strain CVM19633)</name>
    <dbReference type="NCBI Taxonomy" id="439843"/>
    <lineage>
        <taxon>Bacteria</taxon>
        <taxon>Pseudomonadati</taxon>
        <taxon>Pseudomonadota</taxon>
        <taxon>Gammaproteobacteria</taxon>
        <taxon>Enterobacterales</taxon>
        <taxon>Enterobacteriaceae</taxon>
        <taxon>Salmonella</taxon>
    </lineage>
</organism>
<reference key="1">
    <citation type="journal article" date="2011" name="J. Bacteriol.">
        <title>Comparative genomics of 28 Salmonella enterica isolates: evidence for CRISPR-mediated adaptive sublineage evolution.</title>
        <authorList>
            <person name="Fricke W.F."/>
            <person name="Mammel M.K."/>
            <person name="McDermott P.F."/>
            <person name="Tartera C."/>
            <person name="White D.G."/>
            <person name="Leclerc J.E."/>
            <person name="Ravel J."/>
            <person name="Cebula T.A."/>
        </authorList>
    </citation>
    <scope>NUCLEOTIDE SEQUENCE [LARGE SCALE GENOMIC DNA]</scope>
    <source>
        <strain>CVM19633</strain>
    </source>
</reference>
<dbReference type="EC" id="2.6.1.82" evidence="1"/>
<dbReference type="EC" id="2.6.1.29" evidence="1"/>
<dbReference type="EMBL" id="CP001127">
    <property type="protein sequence ID" value="ACF88918.1"/>
    <property type="molecule type" value="Genomic_DNA"/>
</dbReference>
<dbReference type="SMR" id="B4TVV2"/>
<dbReference type="KEGG" id="sew:SeSA_A3409"/>
<dbReference type="HOGENOM" id="CLU_016922_10_0_6"/>
<dbReference type="UniPathway" id="UPA00188">
    <property type="reaction ID" value="UER00290"/>
</dbReference>
<dbReference type="Proteomes" id="UP000001865">
    <property type="component" value="Chromosome"/>
</dbReference>
<dbReference type="GO" id="GO:0019161">
    <property type="term" value="F:diamine transaminase activity"/>
    <property type="evidence" value="ECO:0007669"/>
    <property type="project" value="UniProtKB-EC"/>
</dbReference>
<dbReference type="GO" id="GO:0042802">
    <property type="term" value="F:identical protein binding"/>
    <property type="evidence" value="ECO:0007669"/>
    <property type="project" value="TreeGrafter"/>
</dbReference>
<dbReference type="GO" id="GO:0033094">
    <property type="term" value="F:putrescine--2-oxoglutarate transaminase activity"/>
    <property type="evidence" value="ECO:0007669"/>
    <property type="project" value="UniProtKB-UniRule"/>
</dbReference>
<dbReference type="GO" id="GO:0030170">
    <property type="term" value="F:pyridoxal phosphate binding"/>
    <property type="evidence" value="ECO:0007669"/>
    <property type="project" value="UniProtKB-UniRule"/>
</dbReference>
<dbReference type="GO" id="GO:0019477">
    <property type="term" value="P:L-lysine catabolic process"/>
    <property type="evidence" value="ECO:0007669"/>
    <property type="project" value="UniProtKB-UniRule"/>
</dbReference>
<dbReference type="GO" id="GO:0009447">
    <property type="term" value="P:putrescine catabolic process"/>
    <property type="evidence" value="ECO:0007669"/>
    <property type="project" value="UniProtKB-UniRule"/>
</dbReference>
<dbReference type="CDD" id="cd00610">
    <property type="entry name" value="OAT_like"/>
    <property type="match status" value="1"/>
</dbReference>
<dbReference type="FunFam" id="3.40.640.10:FF:000004">
    <property type="entry name" value="Acetylornithine aminotransferase"/>
    <property type="match status" value="1"/>
</dbReference>
<dbReference type="Gene3D" id="3.90.1150.10">
    <property type="entry name" value="Aspartate Aminotransferase, domain 1"/>
    <property type="match status" value="1"/>
</dbReference>
<dbReference type="Gene3D" id="3.40.640.10">
    <property type="entry name" value="Type I PLP-dependent aspartate aminotransferase-like (Major domain)"/>
    <property type="match status" value="1"/>
</dbReference>
<dbReference type="HAMAP" id="MF_01276">
    <property type="entry name" value="Putres_aminotrans_3"/>
    <property type="match status" value="1"/>
</dbReference>
<dbReference type="InterPro" id="IPR005814">
    <property type="entry name" value="Aminotrans_3"/>
</dbReference>
<dbReference type="InterPro" id="IPR049704">
    <property type="entry name" value="Aminotrans_3_PPA_site"/>
</dbReference>
<dbReference type="InterPro" id="IPR050103">
    <property type="entry name" value="Class-III_PLP-dep_AT"/>
</dbReference>
<dbReference type="InterPro" id="IPR017747">
    <property type="entry name" value="Putrescine_aminotransferase"/>
</dbReference>
<dbReference type="InterPro" id="IPR015424">
    <property type="entry name" value="PyrdxlP-dep_Trfase"/>
</dbReference>
<dbReference type="InterPro" id="IPR015421">
    <property type="entry name" value="PyrdxlP-dep_Trfase_major"/>
</dbReference>
<dbReference type="InterPro" id="IPR015422">
    <property type="entry name" value="PyrdxlP-dep_Trfase_small"/>
</dbReference>
<dbReference type="NCBIfam" id="NF008570">
    <property type="entry name" value="PRK11522.1"/>
    <property type="match status" value="1"/>
</dbReference>
<dbReference type="NCBIfam" id="TIGR03372">
    <property type="entry name" value="putres_am_tran"/>
    <property type="match status" value="1"/>
</dbReference>
<dbReference type="PANTHER" id="PTHR11986">
    <property type="entry name" value="AMINOTRANSFERASE CLASS III"/>
    <property type="match status" value="1"/>
</dbReference>
<dbReference type="PANTHER" id="PTHR11986:SF112">
    <property type="entry name" value="PUTRESCINE AMINOTRANSFERASE"/>
    <property type="match status" value="1"/>
</dbReference>
<dbReference type="Pfam" id="PF00202">
    <property type="entry name" value="Aminotran_3"/>
    <property type="match status" value="1"/>
</dbReference>
<dbReference type="PIRSF" id="PIRSF000521">
    <property type="entry name" value="Transaminase_4ab_Lys_Orn"/>
    <property type="match status" value="1"/>
</dbReference>
<dbReference type="SUPFAM" id="SSF53383">
    <property type="entry name" value="PLP-dependent transferases"/>
    <property type="match status" value="1"/>
</dbReference>
<dbReference type="PROSITE" id="PS00600">
    <property type="entry name" value="AA_TRANSFER_CLASS_3"/>
    <property type="match status" value="1"/>
</dbReference>
<sequence>MNRLPSSASALACSAHALNLIEKRTLNHEEMKALNREVIDYFKEHVNPGFLEYRKSVTAGGDYGAVEWQAGSLNTLVDTQGQEFIDCLGGFGIFNVGHRNPVVVSAVQNQLAKQPLHSQELLDPLRAMLAKTLAALTPGKLKYSFFCNSGTESVEAALKLAKAYQSPRGKFTFIATSGAFHGKSLGALSATAKSTFRRPFMPLLPGFRHVPFGNIDAMSMAFSEGKKTGDEIAAVILEPIQGEGGVILPPQGYLTEVRKLCDEFGALMILDEVQTGMGRTGKMFACEHENVQPDILCLAKALGGGVMPIGATIATEEVFSVLFDNPFLHTTTFGGNPLACAAALATINVLLEQNLPAQAEQKGDTLLDGFRQLAREYPNLVHDARGKGMLMAIEFVDNETGYRFASEMFRQRVLVAGTLNNAKTIRIEPPLTLTIELCEQVLKSARNALAAMQVSVEEV</sequence>
<name>PAT_SALSV</name>
<protein>
    <recommendedName>
        <fullName evidence="1">Putrescine aminotransferase</fullName>
        <shortName evidence="1">PAT</shortName>
        <shortName evidence="1">PATase</shortName>
        <ecNumber evidence="1">2.6.1.82</ecNumber>
    </recommendedName>
    <alternativeName>
        <fullName evidence="1">Cadaverine transaminase</fullName>
    </alternativeName>
    <alternativeName>
        <fullName evidence="1">Diamine transaminase</fullName>
        <ecNumber evidence="1">2.6.1.29</ecNumber>
    </alternativeName>
    <alternativeName>
        <fullName evidence="1">Putrescine transaminase</fullName>
    </alternativeName>
    <alternativeName>
        <fullName evidence="1">Putrescine--2-oxoglutaric acid transaminase</fullName>
    </alternativeName>
</protein>
<proteinExistence type="inferred from homology"/>
<gene>
    <name evidence="1" type="primary">patA</name>
    <name type="ordered locus">SeSA_A3409</name>
</gene>
<evidence type="ECO:0000255" key="1">
    <source>
        <dbReference type="HAMAP-Rule" id="MF_01276"/>
    </source>
</evidence>
<comment type="function">
    <text evidence="1">Catalyzes the aminotransferase reaction from putrescine to 2-oxoglutarate, leading to glutamate and 4-aminobutanal, which spontaneously cyclizes to form 1-pyrroline. This is the first step in one of two pathways for putrescine degradation, where putrescine is converted into 4-aminobutanoate (gamma-aminobutyrate or GABA) via 4-aminobutanal. Also functions as a cadaverine transaminase in a a L-lysine degradation pathway to succinate that proceeds via cadaverine, glutarate and L-2-hydroxyglutarate.</text>
</comment>
<comment type="catalytic activity">
    <reaction evidence="1">
        <text>an alkane-alpha,omega-diamine + 2-oxoglutarate = an omega-aminoaldehyde + L-glutamate</text>
        <dbReference type="Rhea" id="RHEA:18217"/>
        <dbReference type="Rhea" id="RHEA-COMP:9766"/>
        <dbReference type="Rhea" id="RHEA-COMP:12750"/>
        <dbReference type="ChEBI" id="CHEBI:16810"/>
        <dbReference type="ChEBI" id="CHEBI:29985"/>
        <dbReference type="ChEBI" id="CHEBI:70977"/>
        <dbReference type="ChEBI" id="CHEBI:133427"/>
        <dbReference type="EC" id="2.6.1.29"/>
    </reaction>
    <physiologicalReaction direction="left-to-right" evidence="1">
        <dbReference type="Rhea" id="RHEA:18218"/>
    </physiologicalReaction>
</comment>
<comment type="catalytic activity">
    <reaction evidence="1">
        <text>putrescine + 2-oxoglutarate = 1-pyrroline + L-glutamate + H2O</text>
        <dbReference type="Rhea" id="RHEA:12268"/>
        <dbReference type="ChEBI" id="CHEBI:15377"/>
        <dbReference type="ChEBI" id="CHEBI:16810"/>
        <dbReference type="ChEBI" id="CHEBI:29985"/>
        <dbReference type="ChEBI" id="CHEBI:36781"/>
        <dbReference type="ChEBI" id="CHEBI:326268"/>
        <dbReference type="EC" id="2.6.1.82"/>
    </reaction>
    <physiologicalReaction direction="left-to-right" evidence="1">
        <dbReference type="Rhea" id="RHEA:12269"/>
    </physiologicalReaction>
</comment>
<comment type="catalytic activity">
    <reaction evidence="1">
        <text>cadaverine + 2-oxoglutarate = 5-aminopentanal + L-glutamate</text>
        <dbReference type="Rhea" id="RHEA:61624"/>
        <dbReference type="ChEBI" id="CHEBI:16810"/>
        <dbReference type="ChEBI" id="CHEBI:29985"/>
        <dbReference type="ChEBI" id="CHEBI:58384"/>
        <dbReference type="ChEBI" id="CHEBI:144896"/>
    </reaction>
    <physiologicalReaction direction="left-to-right" evidence="1">
        <dbReference type="Rhea" id="RHEA:61625"/>
    </physiologicalReaction>
</comment>
<comment type="cofactor">
    <cofactor evidence="1">
        <name>pyridoxal 5'-phosphate</name>
        <dbReference type="ChEBI" id="CHEBI:597326"/>
    </cofactor>
</comment>
<comment type="pathway">
    <text evidence="1">Amine and polyamine degradation; putrescine degradation; 4-aminobutanal from putrescine (transaminase route): step 1/1.</text>
</comment>
<comment type="similarity">
    <text evidence="1">Belongs to the class-III pyridoxal-phosphate-dependent aminotransferase family. Putrescine aminotransferase subfamily.</text>
</comment>